<proteinExistence type="inferred from homology"/>
<comment type="function">
    <text evidence="1">This protein binds to 23S rRNA in the presence of protein L20.</text>
</comment>
<comment type="subunit">
    <text evidence="1">Part of the 50S ribosomal subunit. Contacts protein L20.</text>
</comment>
<comment type="similarity">
    <text evidence="1">Belongs to the bacterial ribosomal protein bL21 family.</text>
</comment>
<feature type="chain" id="PRO_0000269407" description="Large ribosomal subunit protein bL21">
    <location>
        <begin position="1"/>
        <end position="125"/>
    </location>
</feature>
<evidence type="ECO:0000255" key="1">
    <source>
        <dbReference type="HAMAP-Rule" id="MF_01363"/>
    </source>
</evidence>
<evidence type="ECO:0000305" key="2"/>
<reference key="1">
    <citation type="journal article" date="2006" name="Proc. Natl. Acad. Sci. U.S.A.">
        <title>Genome sequence of Synechococcus CC9311: insights into adaptation to a coastal environment.</title>
        <authorList>
            <person name="Palenik B."/>
            <person name="Ren Q."/>
            <person name="Dupont C.L."/>
            <person name="Myers G.S."/>
            <person name="Heidelberg J.F."/>
            <person name="Badger J.H."/>
            <person name="Madupu R."/>
            <person name="Nelson W.C."/>
            <person name="Brinkac L.M."/>
            <person name="Dodson R.J."/>
            <person name="Durkin A.S."/>
            <person name="Daugherty S.C."/>
            <person name="Sullivan S.A."/>
            <person name="Khouri H."/>
            <person name="Mohamoud Y."/>
            <person name="Halpin R."/>
            <person name="Paulsen I.T."/>
        </authorList>
    </citation>
    <scope>NUCLEOTIDE SEQUENCE [LARGE SCALE GENOMIC DNA]</scope>
    <source>
        <strain>CC9311</strain>
    </source>
</reference>
<keyword id="KW-1185">Reference proteome</keyword>
<keyword id="KW-0687">Ribonucleoprotein</keyword>
<keyword id="KW-0689">Ribosomal protein</keyword>
<keyword id="KW-0694">RNA-binding</keyword>
<keyword id="KW-0699">rRNA-binding</keyword>
<accession>Q0I801</accession>
<sequence length="125" mass="13905">MAETSSSSSQTTPETGTYAIVEASGQQFWVQPNRYYDLDRLHADVDAKITLDKVLLVKNGDAATIGKPYVQGASVELKVMAHRRGQKVIVYKMRPKKKTRRKNGHRQELTRVMVESISVGGKAIS</sequence>
<gene>
    <name evidence="1" type="primary">rplU</name>
    <name evidence="1" type="synonym">rpl21</name>
    <name type="ordered locus">sync_2223</name>
</gene>
<protein>
    <recommendedName>
        <fullName evidence="1">Large ribosomal subunit protein bL21</fullName>
    </recommendedName>
    <alternativeName>
        <fullName evidence="2">50S ribosomal protein L21</fullName>
    </alternativeName>
</protein>
<name>RL21_SYNS3</name>
<organism>
    <name type="scientific">Synechococcus sp. (strain CC9311)</name>
    <dbReference type="NCBI Taxonomy" id="64471"/>
    <lineage>
        <taxon>Bacteria</taxon>
        <taxon>Bacillati</taxon>
        <taxon>Cyanobacteriota</taxon>
        <taxon>Cyanophyceae</taxon>
        <taxon>Synechococcales</taxon>
        <taxon>Synechococcaceae</taxon>
        <taxon>Synechococcus</taxon>
    </lineage>
</organism>
<dbReference type="EMBL" id="CP000435">
    <property type="protein sequence ID" value="ABI45988.1"/>
    <property type="molecule type" value="Genomic_DNA"/>
</dbReference>
<dbReference type="RefSeq" id="WP_011620133.1">
    <property type="nucleotide sequence ID" value="NC_008319.1"/>
</dbReference>
<dbReference type="SMR" id="Q0I801"/>
<dbReference type="STRING" id="64471.sync_2223"/>
<dbReference type="KEGG" id="syg:sync_2223"/>
<dbReference type="eggNOG" id="COG0261">
    <property type="taxonomic scope" value="Bacteria"/>
</dbReference>
<dbReference type="HOGENOM" id="CLU_061463_6_0_3"/>
<dbReference type="OrthoDB" id="9813334at2"/>
<dbReference type="Proteomes" id="UP000001961">
    <property type="component" value="Chromosome"/>
</dbReference>
<dbReference type="GO" id="GO:0005737">
    <property type="term" value="C:cytoplasm"/>
    <property type="evidence" value="ECO:0007669"/>
    <property type="project" value="UniProtKB-ARBA"/>
</dbReference>
<dbReference type="GO" id="GO:1990904">
    <property type="term" value="C:ribonucleoprotein complex"/>
    <property type="evidence" value="ECO:0007669"/>
    <property type="project" value="UniProtKB-KW"/>
</dbReference>
<dbReference type="GO" id="GO:0005840">
    <property type="term" value="C:ribosome"/>
    <property type="evidence" value="ECO:0007669"/>
    <property type="project" value="UniProtKB-KW"/>
</dbReference>
<dbReference type="GO" id="GO:0019843">
    <property type="term" value="F:rRNA binding"/>
    <property type="evidence" value="ECO:0007669"/>
    <property type="project" value="UniProtKB-UniRule"/>
</dbReference>
<dbReference type="GO" id="GO:0003735">
    <property type="term" value="F:structural constituent of ribosome"/>
    <property type="evidence" value="ECO:0007669"/>
    <property type="project" value="InterPro"/>
</dbReference>
<dbReference type="GO" id="GO:0006412">
    <property type="term" value="P:translation"/>
    <property type="evidence" value="ECO:0007669"/>
    <property type="project" value="UniProtKB-UniRule"/>
</dbReference>
<dbReference type="HAMAP" id="MF_01363">
    <property type="entry name" value="Ribosomal_bL21"/>
    <property type="match status" value="1"/>
</dbReference>
<dbReference type="InterPro" id="IPR028909">
    <property type="entry name" value="bL21-like"/>
</dbReference>
<dbReference type="InterPro" id="IPR036164">
    <property type="entry name" value="bL21-like_sf"/>
</dbReference>
<dbReference type="InterPro" id="IPR001787">
    <property type="entry name" value="Ribosomal_bL21"/>
</dbReference>
<dbReference type="InterPro" id="IPR018258">
    <property type="entry name" value="Ribosomal_bL21_CS"/>
</dbReference>
<dbReference type="NCBIfam" id="TIGR00061">
    <property type="entry name" value="L21"/>
    <property type="match status" value="1"/>
</dbReference>
<dbReference type="PANTHER" id="PTHR21349">
    <property type="entry name" value="50S RIBOSOMAL PROTEIN L21"/>
    <property type="match status" value="1"/>
</dbReference>
<dbReference type="PANTHER" id="PTHR21349:SF0">
    <property type="entry name" value="LARGE RIBOSOMAL SUBUNIT PROTEIN BL21M"/>
    <property type="match status" value="1"/>
</dbReference>
<dbReference type="Pfam" id="PF00829">
    <property type="entry name" value="Ribosomal_L21p"/>
    <property type="match status" value="1"/>
</dbReference>
<dbReference type="SUPFAM" id="SSF141091">
    <property type="entry name" value="L21p-like"/>
    <property type="match status" value="1"/>
</dbReference>
<dbReference type="PROSITE" id="PS01169">
    <property type="entry name" value="RIBOSOMAL_L21"/>
    <property type="match status" value="1"/>
</dbReference>